<evidence type="ECO:0000255" key="1">
    <source>
        <dbReference type="HAMAP-Rule" id="MF_00109"/>
    </source>
</evidence>
<proteinExistence type="inferred from homology"/>
<protein>
    <recommendedName>
        <fullName evidence="1">Shikimate kinase</fullName>
        <shortName evidence="1">SK</shortName>
        <ecNumber evidence="1">2.7.1.71</ecNumber>
    </recommendedName>
</protein>
<sequence>MKNIVLTGFMGSGKTTIGRLVAEKLNIDLVDTDSEIIKEFKLTIDQIFEIHGEKKFRECEKRVIERVSKLENVVISTGGGVVLDPENVNLLRKNGVIYFLYASPENILKRLKDDNTRPLLKNGDKLSNIIRLMNIRMPFYKNCDFEINTDILSPELAAEKIISIHMAKESKR</sequence>
<keyword id="KW-0028">Amino-acid biosynthesis</keyword>
<keyword id="KW-0057">Aromatic amino acid biosynthesis</keyword>
<keyword id="KW-0067">ATP-binding</keyword>
<keyword id="KW-0963">Cytoplasm</keyword>
<keyword id="KW-0418">Kinase</keyword>
<keyword id="KW-0460">Magnesium</keyword>
<keyword id="KW-0479">Metal-binding</keyword>
<keyword id="KW-0547">Nucleotide-binding</keyword>
<keyword id="KW-0808">Transferase</keyword>
<name>AROK_CALS8</name>
<organism>
    <name type="scientific">Caldicellulosiruptor saccharolyticus (strain ATCC 43494 / DSM 8903 / Tp8T 6331)</name>
    <dbReference type="NCBI Taxonomy" id="351627"/>
    <lineage>
        <taxon>Bacteria</taxon>
        <taxon>Bacillati</taxon>
        <taxon>Bacillota</taxon>
        <taxon>Bacillota incertae sedis</taxon>
        <taxon>Caldicellulosiruptorales</taxon>
        <taxon>Caldicellulosiruptoraceae</taxon>
        <taxon>Caldicellulosiruptor</taxon>
    </lineage>
</organism>
<accession>A4XLN3</accession>
<feature type="chain" id="PRO_1000022966" description="Shikimate kinase">
    <location>
        <begin position="1"/>
        <end position="172"/>
    </location>
</feature>
<feature type="binding site" evidence="1">
    <location>
        <begin position="11"/>
        <end position="16"/>
    </location>
    <ligand>
        <name>ATP</name>
        <dbReference type="ChEBI" id="CHEBI:30616"/>
    </ligand>
</feature>
<feature type="binding site" evidence="1">
    <location>
        <position position="15"/>
    </location>
    <ligand>
        <name>Mg(2+)</name>
        <dbReference type="ChEBI" id="CHEBI:18420"/>
    </ligand>
</feature>
<feature type="binding site" evidence="1">
    <location>
        <position position="33"/>
    </location>
    <ligand>
        <name>substrate</name>
    </ligand>
</feature>
<feature type="binding site" evidence="1">
    <location>
        <position position="57"/>
    </location>
    <ligand>
        <name>substrate</name>
    </ligand>
</feature>
<feature type="binding site" evidence="1">
    <location>
        <position position="79"/>
    </location>
    <ligand>
        <name>substrate</name>
    </ligand>
</feature>
<feature type="binding site" evidence="1">
    <location>
        <position position="117"/>
    </location>
    <ligand>
        <name>ATP</name>
        <dbReference type="ChEBI" id="CHEBI:30616"/>
    </ligand>
</feature>
<feature type="binding site" evidence="1">
    <location>
        <position position="136"/>
    </location>
    <ligand>
        <name>substrate</name>
    </ligand>
</feature>
<dbReference type="EC" id="2.7.1.71" evidence="1"/>
<dbReference type="EMBL" id="CP000679">
    <property type="protein sequence ID" value="ABP67818.1"/>
    <property type="molecule type" value="Genomic_DNA"/>
</dbReference>
<dbReference type="RefSeq" id="WP_011917744.1">
    <property type="nucleotide sequence ID" value="NC_009437.1"/>
</dbReference>
<dbReference type="SMR" id="A4XLN3"/>
<dbReference type="STRING" id="351627.Csac_2240"/>
<dbReference type="KEGG" id="csc:Csac_2240"/>
<dbReference type="eggNOG" id="COG0703">
    <property type="taxonomic scope" value="Bacteria"/>
</dbReference>
<dbReference type="HOGENOM" id="CLU_057607_4_0_9"/>
<dbReference type="OrthoDB" id="9800332at2"/>
<dbReference type="UniPathway" id="UPA00053">
    <property type="reaction ID" value="UER00088"/>
</dbReference>
<dbReference type="Proteomes" id="UP000000256">
    <property type="component" value="Chromosome"/>
</dbReference>
<dbReference type="GO" id="GO:0005829">
    <property type="term" value="C:cytosol"/>
    <property type="evidence" value="ECO:0007669"/>
    <property type="project" value="TreeGrafter"/>
</dbReference>
<dbReference type="GO" id="GO:0005524">
    <property type="term" value="F:ATP binding"/>
    <property type="evidence" value="ECO:0007669"/>
    <property type="project" value="UniProtKB-UniRule"/>
</dbReference>
<dbReference type="GO" id="GO:0000287">
    <property type="term" value="F:magnesium ion binding"/>
    <property type="evidence" value="ECO:0007669"/>
    <property type="project" value="UniProtKB-UniRule"/>
</dbReference>
<dbReference type="GO" id="GO:0004765">
    <property type="term" value="F:shikimate kinase activity"/>
    <property type="evidence" value="ECO:0007669"/>
    <property type="project" value="UniProtKB-UniRule"/>
</dbReference>
<dbReference type="GO" id="GO:0008652">
    <property type="term" value="P:amino acid biosynthetic process"/>
    <property type="evidence" value="ECO:0007669"/>
    <property type="project" value="UniProtKB-KW"/>
</dbReference>
<dbReference type="GO" id="GO:0009073">
    <property type="term" value="P:aromatic amino acid family biosynthetic process"/>
    <property type="evidence" value="ECO:0007669"/>
    <property type="project" value="UniProtKB-KW"/>
</dbReference>
<dbReference type="GO" id="GO:0009423">
    <property type="term" value="P:chorismate biosynthetic process"/>
    <property type="evidence" value="ECO:0007669"/>
    <property type="project" value="UniProtKB-UniRule"/>
</dbReference>
<dbReference type="CDD" id="cd00464">
    <property type="entry name" value="SK"/>
    <property type="match status" value="1"/>
</dbReference>
<dbReference type="Gene3D" id="3.40.50.300">
    <property type="entry name" value="P-loop containing nucleotide triphosphate hydrolases"/>
    <property type="match status" value="1"/>
</dbReference>
<dbReference type="HAMAP" id="MF_00109">
    <property type="entry name" value="Shikimate_kinase"/>
    <property type="match status" value="1"/>
</dbReference>
<dbReference type="InterPro" id="IPR027417">
    <property type="entry name" value="P-loop_NTPase"/>
</dbReference>
<dbReference type="InterPro" id="IPR031322">
    <property type="entry name" value="Shikimate/glucono_kinase"/>
</dbReference>
<dbReference type="InterPro" id="IPR000623">
    <property type="entry name" value="Shikimate_kinase/TSH1"/>
</dbReference>
<dbReference type="InterPro" id="IPR023000">
    <property type="entry name" value="Shikimate_kinase_CS"/>
</dbReference>
<dbReference type="PANTHER" id="PTHR21087">
    <property type="entry name" value="SHIKIMATE KINASE"/>
    <property type="match status" value="1"/>
</dbReference>
<dbReference type="PANTHER" id="PTHR21087:SF16">
    <property type="entry name" value="SHIKIMATE KINASE 1, CHLOROPLASTIC"/>
    <property type="match status" value="1"/>
</dbReference>
<dbReference type="Pfam" id="PF01202">
    <property type="entry name" value="SKI"/>
    <property type="match status" value="1"/>
</dbReference>
<dbReference type="PRINTS" id="PR01100">
    <property type="entry name" value="SHIKIMTKNASE"/>
</dbReference>
<dbReference type="SUPFAM" id="SSF52540">
    <property type="entry name" value="P-loop containing nucleoside triphosphate hydrolases"/>
    <property type="match status" value="1"/>
</dbReference>
<dbReference type="PROSITE" id="PS01128">
    <property type="entry name" value="SHIKIMATE_KINASE"/>
    <property type="match status" value="1"/>
</dbReference>
<comment type="function">
    <text evidence="1">Catalyzes the specific phosphorylation of the 3-hydroxyl group of shikimic acid using ATP as a cosubstrate.</text>
</comment>
<comment type="catalytic activity">
    <reaction evidence="1">
        <text>shikimate + ATP = 3-phosphoshikimate + ADP + H(+)</text>
        <dbReference type="Rhea" id="RHEA:13121"/>
        <dbReference type="ChEBI" id="CHEBI:15378"/>
        <dbReference type="ChEBI" id="CHEBI:30616"/>
        <dbReference type="ChEBI" id="CHEBI:36208"/>
        <dbReference type="ChEBI" id="CHEBI:145989"/>
        <dbReference type="ChEBI" id="CHEBI:456216"/>
        <dbReference type="EC" id="2.7.1.71"/>
    </reaction>
</comment>
<comment type="cofactor">
    <cofactor evidence="1">
        <name>Mg(2+)</name>
        <dbReference type="ChEBI" id="CHEBI:18420"/>
    </cofactor>
    <text evidence="1">Binds 1 Mg(2+) ion per subunit.</text>
</comment>
<comment type="pathway">
    <text evidence="1">Metabolic intermediate biosynthesis; chorismate biosynthesis; chorismate from D-erythrose 4-phosphate and phosphoenolpyruvate: step 5/7.</text>
</comment>
<comment type="subunit">
    <text evidence="1">Monomer.</text>
</comment>
<comment type="subcellular location">
    <subcellularLocation>
        <location evidence="1">Cytoplasm</location>
    </subcellularLocation>
</comment>
<comment type="similarity">
    <text evidence="1">Belongs to the shikimate kinase family.</text>
</comment>
<gene>
    <name evidence="1" type="primary">aroK</name>
    <name type="ordered locus">Csac_2240</name>
</gene>
<reference key="1">
    <citation type="submission" date="2007-04" db="EMBL/GenBank/DDBJ databases">
        <title>Genome sequence of the thermophilic hydrogen-producing bacterium Caldicellulosiruptor saccharolyticus DSM 8903.</title>
        <authorList>
            <person name="Copeland A."/>
            <person name="Lucas S."/>
            <person name="Lapidus A."/>
            <person name="Barry K."/>
            <person name="Detter J.C."/>
            <person name="Glavina del Rio T."/>
            <person name="Hammon N."/>
            <person name="Israni S."/>
            <person name="Dalin E."/>
            <person name="Tice H."/>
            <person name="Pitluck S."/>
            <person name="Kiss H."/>
            <person name="Brettin T."/>
            <person name="Bruce D."/>
            <person name="Han C."/>
            <person name="Schmutz J."/>
            <person name="Larimer F."/>
            <person name="Land M."/>
            <person name="Hauser L."/>
            <person name="Kyrpides N."/>
            <person name="Lykidis A."/>
            <person name="van de Werken H.J.G."/>
            <person name="Verhaart M.R.A."/>
            <person name="VanFossen A.L."/>
            <person name="Lewis D.L."/>
            <person name="Nichols J.D."/>
            <person name="Goorissen H.P."/>
            <person name="van Niel E.W.J."/>
            <person name="Stams F.J.M."/>
            <person name="Willquist K.U."/>
            <person name="Ward D.E."/>
            <person name="van der Oost J."/>
            <person name="Kelly R.M."/>
            <person name="Kengen S.M.W."/>
            <person name="Richardson P."/>
        </authorList>
    </citation>
    <scope>NUCLEOTIDE SEQUENCE [LARGE SCALE GENOMIC DNA]</scope>
    <source>
        <strain>ATCC 43494 / DSM 8903 / Tp8T 6331</strain>
    </source>
</reference>